<keyword id="KW-0903">Direct protein sequencing</keyword>
<keyword id="KW-0382">Hypotensive agent</keyword>
<keyword id="KW-0481">Metalloenzyme inhibitor</keyword>
<keyword id="KW-0483">Metalloprotease inhibitor</keyword>
<keyword id="KW-0646">Protease inhibitor</keyword>
<keyword id="KW-0873">Pyrrolidone carboxylic acid</keyword>
<keyword id="KW-0964">Secreted</keyword>
<keyword id="KW-0800">Toxin</keyword>
<dbReference type="GO" id="GO:0005576">
    <property type="term" value="C:extracellular region"/>
    <property type="evidence" value="ECO:0007669"/>
    <property type="project" value="UniProtKB-SubCell"/>
</dbReference>
<dbReference type="GO" id="GO:0030414">
    <property type="term" value="F:peptidase inhibitor activity"/>
    <property type="evidence" value="ECO:0007669"/>
    <property type="project" value="UniProtKB-KW"/>
</dbReference>
<dbReference type="GO" id="GO:0090729">
    <property type="term" value="F:toxin activity"/>
    <property type="evidence" value="ECO:0007669"/>
    <property type="project" value="UniProtKB-KW"/>
</dbReference>
<dbReference type="GO" id="GO:0008217">
    <property type="term" value="P:regulation of blood pressure"/>
    <property type="evidence" value="ECO:0007669"/>
    <property type="project" value="UniProtKB-KW"/>
</dbReference>
<proteinExistence type="evidence at protein level"/>
<name>BPPDC_BOTJA</name>
<organism>
    <name type="scientific">Bothrops jararaca</name>
    <name type="common">Jararaca</name>
    <name type="synonym">Bothrops jajaraca</name>
    <dbReference type="NCBI Taxonomy" id="8724"/>
    <lineage>
        <taxon>Eukaryota</taxon>
        <taxon>Metazoa</taxon>
        <taxon>Chordata</taxon>
        <taxon>Craniata</taxon>
        <taxon>Vertebrata</taxon>
        <taxon>Euteleostomi</taxon>
        <taxon>Lepidosauria</taxon>
        <taxon>Squamata</taxon>
        <taxon>Bifurcata</taxon>
        <taxon>Unidentata</taxon>
        <taxon>Episquamata</taxon>
        <taxon>Toxicofera</taxon>
        <taxon>Serpentes</taxon>
        <taxon>Colubroidea</taxon>
        <taxon>Viperidae</taxon>
        <taxon>Crotalinae</taxon>
        <taxon>Bothrops</taxon>
    </lineage>
</organism>
<protein>
    <recommendedName>
        <fullName>Bradykinin-potentiating peptide 13c</fullName>
        <shortName>BPP-13c</shortName>
    </recommendedName>
</protein>
<accession>P0DL02</accession>
<comment type="function">
    <text evidence="1">This peptide both inhibits the activity of the angiotensin-converting enzyme (ACE) and enhances the action of bradykinin by inhibiting the peptidases that inactivate it. It acts as an indirect hypotensive agent.</text>
</comment>
<comment type="subcellular location">
    <subcellularLocation>
        <location>Secreted</location>
    </subcellularLocation>
</comment>
<comment type="tissue specificity">
    <text>Expressed by the venom gland.</text>
</comment>
<comment type="mass spectrometry" mass="1342.6" method="Electrospray" evidence="1"/>
<comment type="similarity">
    <text evidence="2">Belongs to the bradykinin-potentiating peptide family.</text>
</comment>
<reference key="1">
    <citation type="journal article" date="2012" name="Mol. Cell. Proteomics">
        <title>Peptidomics of three Bothrops snake venoms: insights into the molecular diversification of proteomes and peptidomes.</title>
        <authorList>
            <person name="Tashima A.K."/>
            <person name="Zelanis A."/>
            <person name="Kitano E.S."/>
            <person name="Ianzer D."/>
            <person name="Melo R.L."/>
            <person name="Rioli V."/>
            <person name="Sant'anna S.S."/>
            <person name="Schenberg A.C."/>
            <person name="Camargo A.C."/>
            <person name="Serrano S.M.T."/>
        </authorList>
    </citation>
    <scope>PROTEIN SEQUENCE</scope>
    <scope>FUNCTION</scope>
    <scope>PYROGLUTAMATE FORMATION AT GLN-1</scope>
    <scope>MASS SPECTROMETRY</scope>
    <source>
        <tissue>Venom</tissue>
    </source>
</reference>
<feature type="peptide" id="PRO_0000421915" description="Bradykinin-potentiating peptide 13c">
    <location>
        <begin position="1"/>
        <end position="13"/>
    </location>
</feature>
<feature type="modified residue" description="Pyrrolidone carboxylic acid" evidence="1">
    <location>
        <position position="1"/>
    </location>
</feature>
<feature type="unsure residue" description="I or L">
    <location>
        <position position="9"/>
    </location>
</feature>
<sequence length="13" mass="1361">QGRPPHPPIPPAP</sequence>
<evidence type="ECO:0000269" key="1">
    <source>
    </source>
</evidence>
<evidence type="ECO:0000305" key="2"/>